<comment type="catalytic activity">
    <reaction evidence="1">
        <text>a quinone + NADH + H(+) = a quinol + NAD(+)</text>
        <dbReference type="Rhea" id="RHEA:46160"/>
        <dbReference type="ChEBI" id="CHEBI:15378"/>
        <dbReference type="ChEBI" id="CHEBI:24646"/>
        <dbReference type="ChEBI" id="CHEBI:57540"/>
        <dbReference type="ChEBI" id="CHEBI:57945"/>
        <dbReference type="ChEBI" id="CHEBI:132124"/>
        <dbReference type="EC" id="1.6.5.2"/>
    </reaction>
</comment>
<comment type="catalytic activity">
    <reaction evidence="1">
        <text>a quinone + NADPH + H(+) = a quinol + NADP(+)</text>
        <dbReference type="Rhea" id="RHEA:46164"/>
        <dbReference type="ChEBI" id="CHEBI:15378"/>
        <dbReference type="ChEBI" id="CHEBI:24646"/>
        <dbReference type="ChEBI" id="CHEBI:57783"/>
        <dbReference type="ChEBI" id="CHEBI:58349"/>
        <dbReference type="ChEBI" id="CHEBI:132124"/>
        <dbReference type="EC" id="1.6.5.2"/>
    </reaction>
</comment>
<comment type="cofactor">
    <cofactor evidence="1">
        <name>FMN</name>
        <dbReference type="ChEBI" id="CHEBI:58210"/>
    </cofactor>
    <text evidence="1">Binds 1 FMN per monomer.</text>
</comment>
<comment type="similarity">
    <text evidence="1">Belongs to the WrbA family.</text>
</comment>
<organism>
    <name type="scientific">Rhodopseudomonas palustris (strain BisB18)</name>
    <dbReference type="NCBI Taxonomy" id="316056"/>
    <lineage>
        <taxon>Bacteria</taxon>
        <taxon>Pseudomonadati</taxon>
        <taxon>Pseudomonadota</taxon>
        <taxon>Alphaproteobacteria</taxon>
        <taxon>Hyphomicrobiales</taxon>
        <taxon>Nitrobacteraceae</taxon>
        <taxon>Rhodopseudomonas</taxon>
    </lineage>
</organism>
<name>NQOR_RHOPB</name>
<reference key="1">
    <citation type="submission" date="2006-03" db="EMBL/GenBank/DDBJ databases">
        <title>Complete sequence of Rhodopseudomonas palustris BisB18.</title>
        <authorList>
            <consortium name="US DOE Joint Genome Institute"/>
            <person name="Copeland A."/>
            <person name="Lucas S."/>
            <person name="Lapidus A."/>
            <person name="Barry K."/>
            <person name="Detter J.C."/>
            <person name="Glavina del Rio T."/>
            <person name="Hammon N."/>
            <person name="Israni S."/>
            <person name="Dalin E."/>
            <person name="Tice H."/>
            <person name="Pitluck S."/>
            <person name="Chain P."/>
            <person name="Malfatti S."/>
            <person name="Shin M."/>
            <person name="Vergez L."/>
            <person name="Schmutz J."/>
            <person name="Larimer F."/>
            <person name="Land M."/>
            <person name="Hauser L."/>
            <person name="Pelletier D.A."/>
            <person name="Kyrpides N."/>
            <person name="Anderson I."/>
            <person name="Oda Y."/>
            <person name="Harwood C.S."/>
            <person name="Richardson P."/>
        </authorList>
    </citation>
    <scope>NUCLEOTIDE SEQUENCE [LARGE SCALE GENOMIC DNA]</scope>
    <source>
        <strain>BisB18</strain>
    </source>
</reference>
<evidence type="ECO:0000255" key="1">
    <source>
        <dbReference type="HAMAP-Rule" id="MF_01017"/>
    </source>
</evidence>
<keyword id="KW-0285">Flavoprotein</keyword>
<keyword id="KW-0288">FMN</keyword>
<keyword id="KW-0520">NAD</keyword>
<keyword id="KW-0521">NADP</keyword>
<keyword id="KW-0547">Nucleotide-binding</keyword>
<keyword id="KW-0560">Oxidoreductase</keyword>
<accession>Q21B81</accession>
<gene>
    <name type="ordered locus">RPC_0784</name>
</gene>
<dbReference type="EC" id="1.6.5.2" evidence="1"/>
<dbReference type="EMBL" id="CP000301">
    <property type="protein sequence ID" value="ABD86355.1"/>
    <property type="molecule type" value="Genomic_DNA"/>
</dbReference>
<dbReference type="SMR" id="Q21B81"/>
<dbReference type="STRING" id="316056.RPC_0784"/>
<dbReference type="KEGG" id="rpc:RPC_0784"/>
<dbReference type="eggNOG" id="COG0655">
    <property type="taxonomic scope" value="Bacteria"/>
</dbReference>
<dbReference type="HOGENOM" id="CLU_051402_0_2_5"/>
<dbReference type="OrthoDB" id="9801479at2"/>
<dbReference type="GO" id="GO:0016020">
    <property type="term" value="C:membrane"/>
    <property type="evidence" value="ECO:0007669"/>
    <property type="project" value="TreeGrafter"/>
</dbReference>
<dbReference type="GO" id="GO:0050660">
    <property type="term" value="F:flavin adenine dinucleotide binding"/>
    <property type="evidence" value="ECO:0007669"/>
    <property type="project" value="UniProtKB-UniRule"/>
</dbReference>
<dbReference type="GO" id="GO:0010181">
    <property type="term" value="F:FMN binding"/>
    <property type="evidence" value="ECO:0007669"/>
    <property type="project" value="InterPro"/>
</dbReference>
<dbReference type="GO" id="GO:0051287">
    <property type="term" value="F:NAD binding"/>
    <property type="evidence" value="ECO:0007669"/>
    <property type="project" value="UniProtKB-UniRule"/>
</dbReference>
<dbReference type="GO" id="GO:0050136">
    <property type="term" value="F:NADH:ubiquinone reductase (non-electrogenic) activity"/>
    <property type="evidence" value="ECO:0007669"/>
    <property type="project" value="RHEA"/>
</dbReference>
<dbReference type="GO" id="GO:0050661">
    <property type="term" value="F:NADP binding"/>
    <property type="evidence" value="ECO:0007669"/>
    <property type="project" value="UniProtKB-UniRule"/>
</dbReference>
<dbReference type="GO" id="GO:0008753">
    <property type="term" value="F:NADPH dehydrogenase (quinone) activity"/>
    <property type="evidence" value="ECO:0007669"/>
    <property type="project" value="RHEA"/>
</dbReference>
<dbReference type="FunFam" id="3.40.50.360:FF:000001">
    <property type="entry name" value="NAD(P)H dehydrogenase (Quinone) FQR1-like"/>
    <property type="match status" value="1"/>
</dbReference>
<dbReference type="Gene3D" id="3.40.50.360">
    <property type="match status" value="1"/>
</dbReference>
<dbReference type="HAMAP" id="MF_01017">
    <property type="entry name" value="NQOR"/>
    <property type="match status" value="1"/>
</dbReference>
<dbReference type="InterPro" id="IPR008254">
    <property type="entry name" value="Flavodoxin/NO_synth"/>
</dbReference>
<dbReference type="InterPro" id="IPR029039">
    <property type="entry name" value="Flavoprotein-like_sf"/>
</dbReference>
<dbReference type="InterPro" id="IPR010089">
    <property type="entry name" value="Flavoprotein_WrbA-like"/>
</dbReference>
<dbReference type="InterPro" id="IPR005025">
    <property type="entry name" value="FMN_Rdtase-like_dom"/>
</dbReference>
<dbReference type="InterPro" id="IPR037513">
    <property type="entry name" value="NQO"/>
</dbReference>
<dbReference type="NCBIfam" id="TIGR01755">
    <property type="entry name" value="flav_wrbA"/>
    <property type="match status" value="1"/>
</dbReference>
<dbReference type="NCBIfam" id="NF002999">
    <property type="entry name" value="PRK03767.1"/>
    <property type="match status" value="1"/>
</dbReference>
<dbReference type="PANTHER" id="PTHR30546">
    <property type="entry name" value="FLAVODOXIN-RELATED PROTEIN WRBA-RELATED"/>
    <property type="match status" value="1"/>
</dbReference>
<dbReference type="PANTHER" id="PTHR30546:SF23">
    <property type="entry name" value="FLAVOPROTEIN-LIKE PROTEIN YCP4-RELATED"/>
    <property type="match status" value="1"/>
</dbReference>
<dbReference type="Pfam" id="PF03358">
    <property type="entry name" value="FMN_red"/>
    <property type="match status" value="1"/>
</dbReference>
<dbReference type="SUPFAM" id="SSF52218">
    <property type="entry name" value="Flavoproteins"/>
    <property type="match status" value="1"/>
</dbReference>
<dbReference type="PROSITE" id="PS50902">
    <property type="entry name" value="FLAVODOXIN_LIKE"/>
    <property type="match status" value="1"/>
</dbReference>
<proteinExistence type="inferred from homology"/>
<protein>
    <recommendedName>
        <fullName evidence="1">NAD(P)H dehydrogenase (quinone)</fullName>
        <ecNumber evidence="1">1.6.5.2</ecNumber>
    </recommendedName>
    <alternativeName>
        <fullName>Flavoprotein WrbA</fullName>
    </alternativeName>
    <alternativeName>
        <fullName evidence="1">NAD(P)H:quinone oxidoreductase</fullName>
        <shortName evidence="1">NQO</shortName>
    </alternativeName>
</protein>
<sequence length="199" mass="20624">MAKVLVLYYSAYGHIETMANAVAEGAREAGATVDIKRVPELVPPEIAKASHYKLDQAAPIATVDDLANYDAIIIGTGTRFGRITSQMANFLDQAGGLWAKGVLHGKVGGAFTSTASQHGGQETTLFSIITNLLHFGMVVVGLNYGYGGLTTLDEVAGGSPYGATTITGGDGARQPSANELGGARYQGKVIAETAIKLHG</sequence>
<feature type="chain" id="PRO_0000291026" description="NAD(P)H dehydrogenase (quinone)">
    <location>
        <begin position="1"/>
        <end position="199"/>
    </location>
</feature>
<feature type="domain" description="Flavodoxin-like" evidence="1">
    <location>
        <begin position="4"/>
        <end position="190"/>
    </location>
</feature>
<feature type="binding site" evidence="1">
    <location>
        <begin position="10"/>
        <end position="15"/>
    </location>
    <ligand>
        <name>FMN</name>
        <dbReference type="ChEBI" id="CHEBI:58210"/>
    </ligand>
</feature>
<feature type="binding site" evidence="1">
    <location>
        <position position="12"/>
    </location>
    <ligand>
        <name>NAD(+)</name>
        <dbReference type="ChEBI" id="CHEBI:57540"/>
    </ligand>
</feature>
<feature type="binding site" evidence="1">
    <location>
        <begin position="78"/>
        <end position="80"/>
    </location>
    <ligand>
        <name>FMN</name>
        <dbReference type="ChEBI" id="CHEBI:58210"/>
    </ligand>
</feature>
<feature type="binding site" evidence="1">
    <location>
        <position position="98"/>
    </location>
    <ligand>
        <name>substrate</name>
    </ligand>
</feature>
<feature type="binding site" evidence="1">
    <location>
        <begin position="113"/>
        <end position="119"/>
    </location>
    <ligand>
        <name>FMN</name>
        <dbReference type="ChEBI" id="CHEBI:58210"/>
    </ligand>
</feature>
<feature type="binding site" evidence="1">
    <location>
        <position position="134"/>
    </location>
    <ligand>
        <name>FMN</name>
        <dbReference type="ChEBI" id="CHEBI:58210"/>
    </ligand>
</feature>